<evidence type="ECO:0000255" key="1">
    <source>
        <dbReference type="HAMAP-Rule" id="MF_00074"/>
    </source>
</evidence>
<accession>Q71VW1</accession>
<dbReference type="EC" id="2.1.1.-" evidence="1"/>
<dbReference type="EMBL" id="AE017262">
    <property type="protein sequence ID" value="AAT05555.1"/>
    <property type="molecule type" value="Genomic_DNA"/>
</dbReference>
<dbReference type="RefSeq" id="WP_010959101.1">
    <property type="nucleotide sequence ID" value="NC_002973.6"/>
</dbReference>
<dbReference type="SMR" id="Q71VW1"/>
<dbReference type="KEGG" id="lmf:LMOf2365_2790"/>
<dbReference type="HOGENOM" id="CLU_065341_0_2_9"/>
<dbReference type="GO" id="GO:0005829">
    <property type="term" value="C:cytosol"/>
    <property type="evidence" value="ECO:0007669"/>
    <property type="project" value="TreeGrafter"/>
</dbReference>
<dbReference type="GO" id="GO:0070043">
    <property type="term" value="F:rRNA (guanine-N7-)-methyltransferase activity"/>
    <property type="evidence" value="ECO:0007669"/>
    <property type="project" value="UniProtKB-UniRule"/>
</dbReference>
<dbReference type="CDD" id="cd02440">
    <property type="entry name" value="AdoMet_MTases"/>
    <property type="match status" value="1"/>
</dbReference>
<dbReference type="FunFam" id="3.40.50.150:FF:000041">
    <property type="entry name" value="Ribosomal RNA small subunit methyltransferase G"/>
    <property type="match status" value="1"/>
</dbReference>
<dbReference type="Gene3D" id="3.40.50.150">
    <property type="entry name" value="Vaccinia Virus protein VP39"/>
    <property type="match status" value="1"/>
</dbReference>
<dbReference type="HAMAP" id="MF_00074">
    <property type="entry name" value="16SrRNA_methyltr_G"/>
    <property type="match status" value="1"/>
</dbReference>
<dbReference type="InterPro" id="IPR003682">
    <property type="entry name" value="rRNA_ssu_MeTfrase_G"/>
</dbReference>
<dbReference type="InterPro" id="IPR029063">
    <property type="entry name" value="SAM-dependent_MTases_sf"/>
</dbReference>
<dbReference type="NCBIfam" id="TIGR00138">
    <property type="entry name" value="rsmG_gidB"/>
    <property type="match status" value="1"/>
</dbReference>
<dbReference type="PANTHER" id="PTHR31760">
    <property type="entry name" value="S-ADENOSYL-L-METHIONINE-DEPENDENT METHYLTRANSFERASES SUPERFAMILY PROTEIN"/>
    <property type="match status" value="1"/>
</dbReference>
<dbReference type="PANTHER" id="PTHR31760:SF0">
    <property type="entry name" value="S-ADENOSYL-L-METHIONINE-DEPENDENT METHYLTRANSFERASES SUPERFAMILY PROTEIN"/>
    <property type="match status" value="1"/>
</dbReference>
<dbReference type="Pfam" id="PF02527">
    <property type="entry name" value="GidB"/>
    <property type="match status" value="1"/>
</dbReference>
<dbReference type="PIRSF" id="PIRSF003078">
    <property type="entry name" value="GidB"/>
    <property type="match status" value="1"/>
</dbReference>
<dbReference type="SUPFAM" id="SSF53335">
    <property type="entry name" value="S-adenosyl-L-methionine-dependent methyltransferases"/>
    <property type="match status" value="1"/>
</dbReference>
<reference key="1">
    <citation type="journal article" date="2004" name="Nucleic Acids Res.">
        <title>Whole genome comparisons of serotype 4b and 1/2a strains of the food-borne pathogen Listeria monocytogenes reveal new insights into the core genome components of this species.</title>
        <authorList>
            <person name="Nelson K.E."/>
            <person name="Fouts D.E."/>
            <person name="Mongodin E.F."/>
            <person name="Ravel J."/>
            <person name="DeBoy R.T."/>
            <person name="Kolonay J.F."/>
            <person name="Rasko D.A."/>
            <person name="Angiuoli S.V."/>
            <person name="Gill S.R."/>
            <person name="Paulsen I.T."/>
            <person name="Peterson J.D."/>
            <person name="White O."/>
            <person name="Nelson W.C."/>
            <person name="Nierman W.C."/>
            <person name="Beanan M.J."/>
            <person name="Brinkac L.M."/>
            <person name="Daugherty S.C."/>
            <person name="Dodson R.J."/>
            <person name="Durkin A.S."/>
            <person name="Madupu R."/>
            <person name="Haft D.H."/>
            <person name="Selengut J."/>
            <person name="Van Aken S.E."/>
            <person name="Khouri H.M."/>
            <person name="Fedorova N."/>
            <person name="Forberger H.A."/>
            <person name="Tran B."/>
            <person name="Kathariou S."/>
            <person name="Wonderling L.D."/>
            <person name="Uhlich G.A."/>
            <person name="Bayles D.O."/>
            <person name="Luchansky J.B."/>
            <person name="Fraser C.M."/>
        </authorList>
    </citation>
    <scope>NUCLEOTIDE SEQUENCE [LARGE SCALE GENOMIC DNA]</scope>
    <source>
        <strain>F2365</strain>
    </source>
</reference>
<keyword id="KW-0963">Cytoplasm</keyword>
<keyword id="KW-0489">Methyltransferase</keyword>
<keyword id="KW-0698">rRNA processing</keyword>
<keyword id="KW-0949">S-adenosyl-L-methionine</keyword>
<keyword id="KW-0808">Transferase</keyword>
<proteinExistence type="inferred from homology"/>
<name>RSMG_LISMF</name>
<organism>
    <name type="scientific">Listeria monocytogenes serotype 4b (strain F2365)</name>
    <dbReference type="NCBI Taxonomy" id="265669"/>
    <lineage>
        <taxon>Bacteria</taxon>
        <taxon>Bacillati</taxon>
        <taxon>Bacillota</taxon>
        <taxon>Bacilli</taxon>
        <taxon>Bacillales</taxon>
        <taxon>Listeriaceae</taxon>
        <taxon>Listeria</taxon>
    </lineage>
</organism>
<protein>
    <recommendedName>
        <fullName evidence="1">Ribosomal RNA small subunit methyltransferase G</fullName>
        <ecNumber evidence="1">2.1.1.-</ecNumber>
    </recommendedName>
    <alternativeName>
        <fullName evidence="1">16S rRNA 7-methylguanosine methyltransferase</fullName>
        <shortName evidence="1">16S rRNA m7G methyltransferase</shortName>
    </alternativeName>
</protein>
<sequence length="238" mass="27081">MNPEQFQTALAEKGIELSDTQLKQFHDYFEMLVEWNEKMNLTAITDEKEVYLKHFYDSISAAFYVDFTKFDTICDVGAGAGFPSLPIKICFPHLEVSIVDSLKKRMTFLDALAEKLGLTDVHFYHDRAETFGQNKAHREKYDLVTARAVARMSVLSELCMPLVKKGGSFLVMKAAQAEQELQTAEKAIKLFGGKVEEHFAFSLPVEESERNIYVITKTKETPNKYPRKPGTPNKLPIE</sequence>
<gene>
    <name evidence="1" type="primary">rsmG</name>
    <name type="ordered locus">LMOf2365_2790</name>
</gene>
<feature type="chain" id="PRO_0000184276" description="Ribosomal RNA small subunit methyltransferase G">
    <location>
        <begin position="1"/>
        <end position="238"/>
    </location>
</feature>
<feature type="binding site" evidence="1">
    <location>
        <position position="77"/>
    </location>
    <ligand>
        <name>S-adenosyl-L-methionine</name>
        <dbReference type="ChEBI" id="CHEBI:59789"/>
    </ligand>
</feature>
<feature type="binding site" evidence="1">
    <location>
        <position position="82"/>
    </location>
    <ligand>
        <name>S-adenosyl-L-methionine</name>
        <dbReference type="ChEBI" id="CHEBI:59789"/>
    </ligand>
</feature>
<feature type="binding site" evidence="1">
    <location>
        <begin position="128"/>
        <end position="129"/>
    </location>
    <ligand>
        <name>S-adenosyl-L-methionine</name>
        <dbReference type="ChEBI" id="CHEBI:59789"/>
    </ligand>
</feature>
<feature type="binding site" evidence="1">
    <location>
        <position position="147"/>
    </location>
    <ligand>
        <name>S-adenosyl-L-methionine</name>
        <dbReference type="ChEBI" id="CHEBI:59789"/>
    </ligand>
</feature>
<comment type="function">
    <text evidence="1">Specifically methylates the N7 position of guanine in position 535 of 16S rRNA.</text>
</comment>
<comment type="subcellular location">
    <subcellularLocation>
        <location evidence="1">Cytoplasm</location>
    </subcellularLocation>
</comment>
<comment type="similarity">
    <text evidence="1">Belongs to the methyltransferase superfamily. RNA methyltransferase RsmG family.</text>
</comment>